<protein>
    <recommendedName>
        <fullName>GTP-binding nuclear protein Ran</fullName>
    </recommendedName>
    <alternativeName>
        <fullName>GTPase Ran</fullName>
    </alternativeName>
    <alternativeName>
        <fullName>Ras-like protein TC4</fullName>
    </alternativeName>
</protein>
<feature type="chain" id="PRO_0000208715" description="GTP-binding nuclear protein Ran">
    <location>
        <begin position="1"/>
        <end position="223"/>
    </location>
</feature>
<feature type="domain" description="Small GTPase Ran-type" evidence="3">
    <location>
        <begin position="8"/>
        <end position="172"/>
    </location>
</feature>
<feature type="region of interest" description="Switch-I" evidence="3">
    <location>
        <begin position="38"/>
        <end position="46"/>
    </location>
</feature>
<feature type="region of interest" description="Switch-II" evidence="3">
    <location>
        <begin position="69"/>
        <end position="85"/>
    </location>
</feature>
<feature type="binding site" evidence="2">
    <location>
        <begin position="19"/>
        <end position="26"/>
    </location>
    <ligand>
        <name>GTP</name>
        <dbReference type="ChEBI" id="CHEBI:37565"/>
    </ligand>
</feature>
<feature type="binding site" evidence="2">
    <location>
        <position position="69"/>
    </location>
    <ligand>
        <name>GTP</name>
        <dbReference type="ChEBI" id="CHEBI:37565"/>
    </ligand>
</feature>
<feature type="binding site" evidence="2">
    <location>
        <begin position="123"/>
        <end position="126"/>
    </location>
    <ligand>
        <name>GTP</name>
        <dbReference type="ChEBI" id="CHEBI:37565"/>
    </ligand>
</feature>
<feature type="binding site" evidence="2">
    <location>
        <begin position="151"/>
        <end position="153"/>
    </location>
    <ligand>
        <name>GTP</name>
        <dbReference type="ChEBI" id="CHEBI:37565"/>
    </ligand>
</feature>
<name>RAN_TETPY</name>
<sequence length="223" mass="25422">MVDNKQDVVAEFKLVLVGDGGVGKTTFVTRHQTGEFEKRYIATQGVNVSNMILHTTKGAIRFNIWDTAGQEKLGGLREGYYIGADAAIMMFDVTSRITYKNIPKWHKDLTRICENVPIVLVGNKVDSKDSKVKARQITFHRKRSLQYYDVSAKSNYQYEKPFLWILRKLTGDPNLNLVEGIALAPVDIHMTEDQIKQLQMEHDEAMNLAQQGQLPDEEDDEFN</sequence>
<keyword id="KW-0342">GTP-binding</keyword>
<keyword id="KW-0547">Nucleotide-binding</keyword>
<keyword id="KW-0539">Nucleus</keyword>
<keyword id="KW-0653">Protein transport</keyword>
<keyword id="KW-0813">Transport</keyword>
<organism>
    <name type="scientific">Tetrahymena pyriformis</name>
    <dbReference type="NCBI Taxonomy" id="5908"/>
    <lineage>
        <taxon>Eukaryota</taxon>
        <taxon>Sar</taxon>
        <taxon>Alveolata</taxon>
        <taxon>Ciliophora</taxon>
        <taxon>Intramacronucleata</taxon>
        <taxon>Oligohymenophorea</taxon>
        <taxon>Hymenostomatida</taxon>
        <taxon>Tetrahymenina</taxon>
        <taxon>Tetrahymenidae</taxon>
        <taxon>Tetrahymena</taxon>
    </lineage>
</organism>
<proteinExistence type="evidence at transcript level"/>
<comment type="function">
    <text evidence="1">GTP-binding protein involved in nucleocytoplasmic transport. Required for the import of protein into the nucleus and also for RNA export. Involved in chromatin condensation and control of cell cycle (By similarity).</text>
</comment>
<comment type="subunit">
    <text evidence="2">Monomer. Found in a nuclear export complex with RanGTP, exportin and pre-miRNA (By similarity).</text>
</comment>
<comment type="subcellular location">
    <subcellularLocation>
        <location evidence="1">Nucleus</location>
    </subcellularLocation>
</comment>
<comment type="similarity">
    <text evidence="3 4">Belongs to the small GTPase superfamily. Ran family.</text>
</comment>
<reference key="1">
    <citation type="journal article" date="1994" name="Gene">
        <title>Cloning of cDNAs encoding a cell-cycle-regulatory GTP-binding low-M(r) (GBLM) protein, Ran/TC4, from micronucleated Tetrahymena thermophila and amicronucleated Tetrahymena pyriformis.</title>
        <authorList>
            <person name="Nagata K."/>
            <person name="Takemasa T."/>
            <person name="Alam S."/>
            <person name="Hattori T."/>
            <person name="Watanabe Y."/>
            <person name="Nozawa Y."/>
        </authorList>
    </citation>
    <scope>NUCLEOTIDE SEQUENCE [MRNA]</scope>
    <source>
        <strain>W</strain>
    </source>
</reference>
<dbReference type="EMBL" id="D21825">
    <property type="protein sequence ID" value="BAA04849.1"/>
    <property type="molecule type" value="mRNA"/>
</dbReference>
<dbReference type="SMR" id="P41914"/>
<dbReference type="GO" id="GO:0005737">
    <property type="term" value="C:cytoplasm"/>
    <property type="evidence" value="ECO:0007669"/>
    <property type="project" value="TreeGrafter"/>
</dbReference>
<dbReference type="GO" id="GO:0005634">
    <property type="term" value="C:nucleus"/>
    <property type="evidence" value="ECO:0007669"/>
    <property type="project" value="UniProtKB-SubCell"/>
</dbReference>
<dbReference type="GO" id="GO:0005525">
    <property type="term" value="F:GTP binding"/>
    <property type="evidence" value="ECO:0007669"/>
    <property type="project" value="UniProtKB-KW"/>
</dbReference>
<dbReference type="GO" id="GO:0003924">
    <property type="term" value="F:GTPase activity"/>
    <property type="evidence" value="ECO:0007669"/>
    <property type="project" value="InterPro"/>
</dbReference>
<dbReference type="GO" id="GO:0006606">
    <property type="term" value="P:protein import into nucleus"/>
    <property type="evidence" value="ECO:0007669"/>
    <property type="project" value="TreeGrafter"/>
</dbReference>
<dbReference type="GO" id="GO:0000054">
    <property type="term" value="P:ribosomal subunit export from nucleus"/>
    <property type="evidence" value="ECO:0007669"/>
    <property type="project" value="TreeGrafter"/>
</dbReference>
<dbReference type="CDD" id="cd00877">
    <property type="entry name" value="Ran"/>
    <property type="match status" value="1"/>
</dbReference>
<dbReference type="FunFam" id="3.40.50.300:FF:000369">
    <property type="entry name" value="GTP-binding nuclear protein"/>
    <property type="match status" value="1"/>
</dbReference>
<dbReference type="Gene3D" id="3.40.50.300">
    <property type="entry name" value="P-loop containing nucleotide triphosphate hydrolases"/>
    <property type="match status" value="1"/>
</dbReference>
<dbReference type="InterPro" id="IPR027417">
    <property type="entry name" value="P-loop_NTPase"/>
</dbReference>
<dbReference type="InterPro" id="IPR002041">
    <property type="entry name" value="Ran_GTPase"/>
</dbReference>
<dbReference type="InterPro" id="IPR005225">
    <property type="entry name" value="Small_GTP-bd"/>
</dbReference>
<dbReference type="InterPro" id="IPR001806">
    <property type="entry name" value="Small_GTPase"/>
</dbReference>
<dbReference type="NCBIfam" id="TIGR00231">
    <property type="entry name" value="small_GTP"/>
    <property type="match status" value="1"/>
</dbReference>
<dbReference type="PANTHER" id="PTHR24071:SF0">
    <property type="entry name" value="GTP-BINDING NUCLEAR PROTEIN RAN"/>
    <property type="match status" value="1"/>
</dbReference>
<dbReference type="PANTHER" id="PTHR24071">
    <property type="entry name" value="RAN GTPASE"/>
    <property type="match status" value="1"/>
</dbReference>
<dbReference type="Pfam" id="PF00071">
    <property type="entry name" value="Ras"/>
    <property type="match status" value="1"/>
</dbReference>
<dbReference type="PRINTS" id="PR00627">
    <property type="entry name" value="GTPRANTC4"/>
</dbReference>
<dbReference type="SMART" id="SM00175">
    <property type="entry name" value="RAB"/>
    <property type="match status" value="1"/>
</dbReference>
<dbReference type="SMART" id="SM00176">
    <property type="entry name" value="RAN"/>
    <property type="match status" value="1"/>
</dbReference>
<dbReference type="SMART" id="SM00173">
    <property type="entry name" value="RAS"/>
    <property type="match status" value="1"/>
</dbReference>
<dbReference type="SMART" id="SM00174">
    <property type="entry name" value="RHO"/>
    <property type="match status" value="1"/>
</dbReference>
<dbReference type="SUPFAM" id="SSF52540">
    <property type="entry name" value="P-loop containing nucleoside triphosphate hydrolases"/>
    <property type="match status" value="1"/>
</dbReference>
<dbReference type="PROSITE" id="PS51418">
    <property type="entry name" value="RAN"/>
    <property type="match status" value="1"/>
</dbReference>
<accession>P41914</accession>
<evidence type="ECO:0000250" key="1"/>
<evidence type="ECO:0000250" key="2">
    <source>
        <dbReference type="UniProtKB" id="P62825"/>
    </source>
</evidence>
<evidence type="ECO:0000255" key="3">
    <source>
        <dbReference type="PROSITE-ProRule" id="PRU00752"/>
    </source>
</evidence>
<evidence type="ECO:0000305" key="4"/>